<dbReference type="EC" id="2.5.1.39" evidence="1"/>
<dbReference type="EMBL" id="AE014297">
    <property type="protein sequence ID" value="AAF54222.1"/>
    <property type="molecule type" value="Genomic_DNA"/>
</dbReference>
<dbReference type="EMBL" id="AY089354">
    <property type="protein sequence ID" value="AAL90092.1"/>
    <property type="molecule type" value="mRNA"/>
</dbReference>
<dbReference type="RefSeq" id="NP_649789.1">
    <property type="nucleotide sequence ID" value="NM_141532.3"/>
</dbReference>
<dbReference type="SMR" id="Q9VHS7"/>
<dbReference type="BioGRID" id="66169">
    <property type="interactions" value="2"/>
</dbReference>
<dbReference type="FunCoup" id="Q9VHS7">
    <property type="interactions" value="900"/>
</dbReference>
<dbReference type="IntAct" id="Q9VHS7">
    <property type="interactions" value="2"/>
</dbReference>
<dbReference type="STRING" id="7227.FBpp0081347"/>
<dbReference type="PaxDb" id="7227-FBpp0081347"/>
<dbReference type="DNASU" id="40988"/>
<dbReference type="EnsemblMetazoa" id="FBtr0081858">
    <property type="protein sequence ID" value="FBpp0081347"/>
    <property type="gene ID" value="FBgn0037574"/>
</dbReference>
<dbReference type="GeneID" id="40988"/>
<dbReference type="KEGG" id="dme:Dmel_CG9613"/>
<dbReference type="AGR" id="FB:FBgn0037574"/>
<dbReference type="CTD" id="27235"/>
<dbReference type="FlyBase" id="FBgn0037574">
    <property type="gene designation" value="Coq2"/>
</dbReference>
<dbReference type="VEuPathDB" id="VectorBase:FBgn0037574"/>
<dbReference type="eggNOG" id="KOG1381">
    <property type="taxonomic scope" value="Eukaryota"/>
</dbReference>
<dbReference type="GeneTree" id="ENSGT00940000153771"/>
<dbReference type="HOGENOM" id="CLU_034879_2_1_1"/>
<dbReference type="InParanoid" id="Q9VHS7"/>
<dbReference type="OMA" id="KFEHTIF"/>
<dbReference type="OrthoDB" id="18170at2759"/>
<dbReference type="PhylomeDB" id="Q9VHS7"/>
<dbReference type="Reactome" id="R-DME-1268020">
    <property type="pathway name" value="Mitochondrial protein import"/>
</dbReference>
<dbReference type="Reactome" id="R-DME-2142789">
    <property type="pathway name" value="Ubiquinol biosynthesis"/>
</dbReference>
<dbReference type="UniPathway" id="UPA00232"/>
<dbReference type="BioGRID-ORCS" id="40988">
    <property type="hits" value="0 hits in 1 CRISPR screen"/>
</dbReference>
<dbReference type="GenomeRNAi" id="40988"/>
<dbReference type="PRO" id="PR:Q9VHS7"/>
<dbReference type="Proteomes" id="UP000000803">
    <property type="component" value="Chromosome 3R"/>
</dbReference>
<dbReference type="Bgee" id="FBgn0037574">
    <property type="expression patterns" value="Expressed in adult class III enteroendocrine cell in adult midgut (Drosophila) and 50 other cell types or tissues"/>
</dbReference>
<dbReference type="GO" id="GO:0005743">
    <property type="term" value="C:mitochondrial inner membrane"/>
    <property type="evidence" value="ECO:0000250"/>
    <property type="project" value="UniProtKB"/>
</dbReference>
<dbReference type="GO" id="GO:0008412">
    <property type="term" value="F:4-hydroxybenzoate polyprenyltransferase activity"/>
    <property type="evidence" value="ECO:0000250"/>
    <property type="project" value="UniProtKB"/>
</dbReference>
<dbReference type="GO" id="GO:0050832">
    <property type="term" value="P:defense response to fungus"/>
    <property type="evidence" value="ECO:0000315"/>
    <property type="project" value="FlyBase"/>
</dbReference>
<dbReference type="GO" id="GO:0050829">
    <property type="term" value="P:defense response to Gram-negative bacterium"/>
    <property type="evidence" value="ECO:0000315"/>
    <property type="project" value="FlyBase"/>
</dbReference>
<dbReference type="GO" id="GO:0050830">
    <property type="term" value="P:defense response to Gram-positive bacterium"/>
    <property type="evidence" value="ECO:0000315"/>
    <property type="project" value="FlyBase"/>
</dbReference>
<dbReference type="GO" id="GO:0008340">
    <property type="term" value="P:determination of adult lifespan"/>
    <property type="evidence" value="ECO:0000314"/>
    <property type="project" value="FlyBase"/>
</dbReference>
<dbReference type="GO" id="GO:0008299">
    <property type="term" value="P:isoprenoid biosynthetic process"/>
    <property type="evidence" value="ECO:0007669"/>
    <property type="project" value="UniProtKB-UniRule"/>
</dbReference>
<dbReference type="GO" id="GO:0006744">
    <property type="term" value="P:ubiquinone biosynthetic process"/>
    <property type="evidence" value="ECO:0000315"/>
    <property type="project" value="FlyBase"/>
</dbReference>
<dbReference type="CDD" id="cd13959">
    <property type="entry name" value="PT_UbiA_COQ2"/>
    <property type="match status" value="1"/>
</dbReference>
<dbReference type="FunFam" id="1.20.120.1780:FF:000001">
    <property type="entry name" value="4-hydroxybenzoate octaprenyltransferase"/>
    <property type="match status" value="1"/>
</dbReference>
<dbReference type="FunFam" id="1.10.357.140:FF:000003">
    <property type="entry name" value="4-hydroxybenzoate polyprenyltransferase, mitochondrial"/>
    <property type="match status" value="1"/>
</dbReference>
<dbReference type="Gene3D" id="1.10.357.140">
    <property type="entry name" value="UbiA prenyltransferase"/>
    <property type="match status" value="1"/>
</dbReference>
<dbReference type="Gene3D" id="1.20.120.1780">
    <property type="entry name" value="UbiA prenyltransferase"/>
    <property type="match status" value="1"/>
</dbReference>
<dbReference type="HAMAP" id="MF_01635">
    <property type="entry name" value="UbiA"/>
    <property type="match status" value="1"/>
</dbReference>
<dbReference type="InterPro" id="IPR006370">
    <property type="entry name" value="HB_polyprenyltransferase-like"/>
</dbReference>
<dbReference type="InterPro" id="IPR039653">
    <property type="entry name" value="Prenyltransferase"/>
</dbReference>
<dbReference type="InterPro" id="IPR000537">
    <property type="entry name" value="UbiA_prenyltransferase"/>
</dbReference>
<dbReference type="InterPro" id="IPR030470">
    <property type="entry name" value="UbiA_prenylTrfase_CS"/>
</dbReference>
<dbReference type="InterPro" id="IPR044878">
    <property type="entry name" value="UbiA_sf"/>
</dbReference>
<dbReference type="NCBIfam" id="TIGR01474">
    <property type="entry name" value="ubiA_proteo"/>
    <property type="match status" value="1"/>
</dbReference>
<dbReference type="PANTHER" id="PTHR11048:SF28">
    <property type="entry name" value="4-HYDROXYBENZOATE POLYPRENYLTRANSFERASE, MITOCHONDRIAL"/>
    <property type="match status" value="1"/>
</dbReference>
<dbReference type="PANTHER" id="PTHR11048">
    <property type="entry name" value="PRENYLTRANSFERASES"/>
    <property type="match status" value="1"/>
</dbReference>
<dbReference type="Pfam" id="PF01040">
    <property type="entry name" value="UbiA"/>
    <property type="match status" value="1"/>
</dbReference>
<dbReference type="PROSITE" id="PS00943">
    <property type="entry name" value="UBIA"/>
    <property type="match status" value="1"/>
</dbReference>
<accession>Q9VHS7</accession>
<protein>
    <recommendedName>
        <fullName evidence="1">4-hydroxybenzoate polyprenyltransferase, mitochondrial</fullName>
        <shortName evidence="1">4-HB polyprenyltransferase</shortName>
        <ecNumber evidence="1">2.5.1.39</ecNumber>
    </recommendedName>
    <alternativeName>
        <fullName>Coenzyme Q biosynthesis protein 2</fullName>
    </alternativeName>
    <alternativeName>
        <fullName evidence="1">Para-hydroxybenzoate--polyprenyltransferase</fullName>
        <shortName evidence="1">PHB:PPT</shortName>
        <shortName evidence="1">PHB:polyprenyltransferase</shortName>
    </alternativeName>
</protein>
<sequence>MYALRHLRLQSARHFRSSYAAAATTKHMLPRQPARVLIGDWSTWDKSRLQDVCSRSSSTATEPVKQQTPLQELVSAAKPYAQLMRIDRPIGTYLLFWPCAWSIALSADAGCWPDLTMLGLFGTGALIMRGAGCTINDLWDKDIDAKVERTRLRPLASGQISQFDAIVFLSAQLSLGLLVLVQLNWQSILLGASSLGLVITYPLMKRVTYWPQLVLGMAFNWGALLGWCATQGSVNLAACLPLYLSGVCWTIVYDTIYAHQDKLDDLQIGVKSTALRFGENTKVWLSGFTAAMLTGLSAAGWACDQTVPYYAAVGVVGAHLVQQIYSLNIDNPSDCAKKFISNHQVGLILFLGIVLGTLLKSDESKKQRQSSLTTSTASSYVPALPQKPEVLS</sequence>
<feature type="transit peptide" description="Mitochondrion" evidence="1">
    <location>
        <begin position="1"/>
        <end position="22"/>
    </location>
</feature>
<feature type="chain" id="PRO_0000228627" description="4-hydroxybenzoate polyprenyltransferase, mitochondrial" evidence="1">
    <location>
        <begin position="23"/>
        <end position="392"/>
    </location>
</feature>
<feature type="transmembrane region" description="Helical" evidence="1">
    <location>
        <begin position="90"/>
        <end position="110"/>
    </location>
</feature>
<feature type="transmembrane region" description="Helical" evidence="1">
    <location>
        <begin position="115"/>
        <end position="135"/>
    </location>
</feature>
<feature type="transmembrane region" description="Helical" evidence="1">
    <location>
        <begin position="163"/>
        <end position="183"/>
    </location>
</feature>
<feature type="transmembrane region" description="Helical" evidence="1">
    <location>
        <begin position="184"/>
        <end position="204"/>
    </location>
</feature>
<feature type="transmembrane region" description="Helical" evidence="1">
    <location>
        <begin position="207"/>
        <end position="227"/>
    </location>
</feature>
<feature type="transmembrane region" description="Helical" evidence="1">
    <location>
        <begin position="236"/>
        <end position="256"/>
    </location>
</feature>
<feature type="transmembrane region" description="Helical" evidence="1">
    <location>
        <begin position="283"/>
        <end position="303"/>
    </location>
</feature>
<feature type="transmembrane region" description="Helical" evidence="1">
    <location>
        <begin position="307"/>
        <end position="327"/>
    </location>
</feature>
<feature type="transmembrane region" description="Helical" evidence="1">
    <location>
        <begin position="339"/>
        <end position="359"/>
    </location>
</feature>
<feature type="region of interest" description="Disordered" evidence="2">
    <location>
        <begin position="365"/>
        <end position="392"/>
    </location>
</feature>
<feature type="compositionally biased region" description="Polar residues" evidence="2">
    <location>
        <begin position="369"/>
        <end position="379"/>
    </location>
</feature>
<gene>
    <name evidence="1" type="primary">Coq2</name>
    <name type="ORF">CG9613</name>
</gene>
<keyword id="KW-0414">Isoprene biosynthesis</keyword>
<keyword id="KW-0472">Membrane</keyword>
<keyword id="KW-0496">Mitochondrion</keyword>
<keyword id="KW-0999">Mitochondrion inner membrane</keyword>
<keyword id="KW-1185">Reference proteome</keyword>
<keyword id="KW-0808">Transferase</keyword>
<keyword id="KW-0809">Transit peptide</keyword>
<keyword id="KW-0812">Transmembrane</keyword>
<keyword id="KW-1133">Transmembrane helix</keyword>
<keyword id="KW-0831">Ubiquinone biosynthesis</keyword>
<reference key="1">
    <citation type="journal article" date="2000" name="Science">
        <title>The genome sequence of Drosophila melanogaster.</title>
        <authorList>
            <person name="Adams M.D."/>
            <person name="Celniker S.E."/>
            <person name="Holt R.A."/>
            <person name="Evans C.A."/>
            <person name="Gocayne J.D."/>
            <person name="Amanatides P.G."/>
            <person name="Scherer S.E."/>
            <person name="Li P.W."/>
            <person name="Hoskins R.A."/>
            <person name="Galle R.F."/>
            <person name="George R.A."/>
            <person name="Lewis S.E."/>
            <person name="Richards S."/>
            <person name="Ashburner M."/>
            <person name="Henderson S.N."/>
            <person name="Sutton G.G."/>
            <person name="Wortman J.R."/>
            <person name="Yandell M.D."/>
            <person name="Zhang Q."/>
            <person name="Chen L.X."/>
            <person name="Brandon R.C."/>
            <person name="Rogers Y.-H.C."/>
            <person name="Blazej R.G."/>
            <person name="Champe M."/>
            <person name="Pfeiffer B.D."/>
            <person name="Wan K.H."/>
            <person name="Doyle C."/>
            <person name="Baxter E.G."/>
            <person name="Helt G."/>
            <person name="Nelson C.R."/>
            <person name="Miklos G.L.G."/>
            <person name="Abril J.F."/>
            <person name="Agbayani A."/>
            <person name="An H.-J."/>
            <person name="Andrews-Pfannkoch C."/>
            <person name="Baldwin D."/>
            <person name="Ballew R.M."/>
            <person name="Basu A."/>
            <person name="Baxendale J."/>
            <person name="Bayraktaroglu L."/>
            <person name="Beasley E.M."/>
            <person name="Beeson K.Y."/>
            <person name="Benos P.V."/>
            <person name="Berman B.P."/>
            <person name="Bhandari D."/>
            <person name="Bolshakov S."/>
            <person name="Borkova D."/>
            <person name="Botchan M.R."/>
            <person name="Bouck J."/>
            <person name="Brokstein P."/>
            <person name="Brottier P."/>
            <person name="Burtis K.C."/>
            <person name="Busam D.A."/>
            <person name="Butler H."/>
            <person name="Cadieu E."/>
            <person name="Center A."/>
            <person name="Chandra I."/>
            <person name="Cherry J.M."/>
            <person name="Cawley S."/>
            <person name="Dahlke C."/>
            <person name="Davenport L.B."/>
            <person name="Davies P."/>
            <person name="de Pablos B."/>
            <person name="Delcher A."/>
            <person name="Deng Z."/>
            <person name="Mays A.D."/>
            <person name="Dew I."/>
            <person name="Dietz S.M."/>
            <person name="Dodson K."/>
            <person name="Doup L.E."/>
            <person name="Downes M."/>
            <person name="Dugan-Rocha S."/>
            <person name="Dunkov B.C."/>
            <person name="Dunn P."/>
            <person name="Durbin K.J."/>
            <person name="Evangelista C.C."/>
            <person name="Ferraz C."/>
            <person name="Ferriera S."/>
            <person name="Fleischmann W."/>
            <person name="Fosler C."/>
            <person name="Gabrielian A.E."/>
            <person name="Garg N.S."/>
            <person name="Gelbart W.M."/>
            <person name="Glasser K."/>
            <person name="Glodek A."/>
            <person name="Gong F."/>
            <person name="Gorrell J.H."/>
            <person name="Gu Z."/>
            <person name="Guan P."/>
            <person name="Harris M."/>
            <person name="Harris N.L."/>
            <person name="Harvey D.A."/>
            <person name="Heiman T.J."/>
            <person name="Hernandez J.R."/>
            <person name="Houck J."/>
            <person name="Hostin D."/>
            <person name="Houston K.A."/>
            <person name="Howland T.J."/>
            <person name="Wei M.-H."/>
            <person name="Ibegwam C."/>
            <person name="Jalali M."/>
            <person name="Kalush F."/>
            <person name="Karpen G.H."/>
            <person name="Ke Z."/>
            <person name="Kennison J.A."/>
            <person name="Ketchum K.A."/>
            <person name="Kimmel B.E."/>
            <person name="Kodira C.D."/>
            <person name="Kraft C.L."/>
            <person name="Kravitz S."/>
            <person name="Kulp D."/>
            <person name="Lai Z."/>
            <person name="Lasko P."/>
            <person name="Lei Y."/>
            <person name="Levitsky A.A."/>
            <person name="Li J.H."/>
            <person name="Li Z."/>
            <person name="Liang Y."/>
            <person name="Lin X."/>
            <person name="Liu X."/>
            <person name="Mattei B."/>
            <person name="McIntosh T.C."/>
            <person name="McLeod M.P."/>
            <person name="McPherson D."/>
            <person name="Merkulov G."/>
            <person name="Milshina N.V."/>
            <person name="Mobarry C."/>
            <person name="Morris J."/>
            <person name="Moshrefi A."/>
            <person name="Mount S.M."/>
            <person name="Moy M."/>
            <person name="Murphy B."/>
            <person name="Murphy L."/>
            <person name="Muzny D.M."/>
            <person name="Nelson D.L."/>
            <person name="Nelson D.R."/>
            <person name="Nelson K.A."/>
            <person name="Nixon K."/>
            <person name="Nusskern D.R."/>
            <person name="Pacleb J.M."/>
            <person name="Palazzolo M."/>
            <person name="Pittman G.S."/>
            <person name="Pan S."/>
            <person name="Pollard J."/>
            <person name="Puri V."/>
            <person name="Reese M.G."/>
            <person name="Reinert K."/>
            <person name="Remington K."/>
            <person name="Saunders R.D.C."/>
            <person name="Scheeler F."/>
            <person name="Shen H."/>
            <person name="Shue B.C."/>
            <person name="Siden-Kiamos I."/>
            <person name="Simpson M."/>
            <person name="Skupski M.P."/>
            <person name="Smith T.J."/>
            <person name="Spier E."/>
            <person name="Spradling A.C."/>
            <person name="Stapleton M."/>
            <person name="Strong R."/>
            <person name="Sun E."/>
            <person name="Svirskas R."/>
            <person name="Tector C."/>
            <person name="Turner R."/>
            <person name="Venter E."/>
            <person name="Wang A.H."/>
            <person name="Wang X."/>
            <person name="Wang Z.-Y."/>
            <person name="Wassarman D.A."/>
            <person name="Weinstock G.M."/>
            <person name="Weissenbach J."/>
            <person name="Williams S.M."/>
            <person name="Woodage T."/>
            <person name="Worley K.C."/>
            <person name="Wu D."/>
            <person name="Yang S."/>
            <person name="Yao Q.A."/>
            <person name="Ye J."/>
            <person name="Yeh R.-F."/>
            <person name="Zaveri J.S."/>
            <person name="Zhan M."/>
            <person name="Zhang G."/>
            <person name="Zhao Q."/>
            <person name="Zheng L."/>
            <person name="Zheng X.H."/>
            <person name="Zhong F.N."/>
            <person name="Zhong W."/>
            <person name="Zhou X."/>
            <person name="Zhu S.C."/>
            <person name="Zhu X."/>
            <person name="Smith H.O."/>
            <person name="Gibbs R.A."/>
            <person name="Myers E.W."/>
            <person name="Rubin G.M."/>
            <person name="Venter J.C."/>
        </authorList>
    </citation>
    <scope>NUCLEOTIDE SEQUENCE [LARGE SCALE GENOMIC DNA]</scope>
    <source>
        <strain>Berkeley</strain>
    </source>
</reference>
<reference key="2">
    <citation type="journal article" date="2002" name="Genome Biol.">
        <title>Annotation of the Drosophila melanogaster euchromatic genome: a systematic review.</title>
        <authorList>
            <person name="Misra S."/>
            <person name="Crosby M.A."/>
            <person name="Mungall C.J."/>
            <person name="Matthews B.B."/>
            <person name="Campbell K.S."/>
            <person name="Hradecky P."/>
            <person name="Huang Y."/>
            <person name="Kaminker J.S."/>
            <person name="Millburn G.H."/>
            <person name="Prochnik S.E."/>
            <person name="Smith C.D."/>
            <person name="Tupy J.L."/>
            <person name="Whitfield E.J."/>
            <person name="Bayraktaroglu L."/>
            <person name="Berman B.P."/>
            <person name="Bettencourt B.R."/>
            <person name="Celniker S.E."/>
            <person name="de Grey A.D.N.J."/>
            <person name="Drysdale R.A."/>
            <person name="Harris N.L."/>
            <person name="Richter J."/>
            <person name="Russo S."/>
            <person name="Schroeder A.J."/>
            <person name="Shu S.Q."/>
            <person name="Stapleton M."/>
            <person name="Yamada C."/>
            <person name="Ashburner M."/>
            <person name="Gelbart W.M."/>
            <person name="Rubin G.M."/>
            <person name="Lewis S.E."/>
        </authorList>
    </citation>
    <scope>GENOME REANNOTATION</scope>
    <source>
        <strain>Berkeley</strain>
    </source>
</reference>
<reference key="3">
    <citation type="journal article" date="2002" name="Genome Biol.">
        <title>A Drosophila full-length cDNA resource.</title>
        <authorList>
            <person name="Stapleton M."/>
            <person name="Carlson J.W."/>
            <person name="Brokstein P."/>
            <person name="Yu C."/>
            <person name="Champe M."/>
            <person name="George R.A."/>
            <person name="Guarin H."/>
            <person name="Kronmiller B."/>
            <person name="Pacleb J.M."/>
            <person name="Park S."/>
            <person name="Wan K.H."/>
            <person name="Rubin G.M."/>
            <person name="Celniker S.E."/>
        </authorList>
    </citation>
    <scope>NUCLEOTIDE SEQUENCE [LARGE SCALE MRNA]</scope>
    <source>
        <strain>Berkeley</strain>
        <tissue>Testis</tissue>
    </source>
</reference>
<reference key="4">
    <citation type="journal article" date="2006" name="Genetics">
        <title>An efficient genetic screen in Drosophila to identify nuclear-encoded genes with mitochondrial function.</title>
        <authorList>
            <person name="Liao T.S."/>
            <person name="Call G.B."/>
            <person name="Guptan P."/>
            <person name="Cespedes A."/>
            <person name="Marshall J."/>
            <person name="Yackle K."/>
            <person name="Owusu-Ansah E."/>
            <person name="Mandal S."/>
            <person name="Fang Q.A."/>
            <person name="Goodstein G.L."/>
            <person name="Kim W."/>
            <person name="Banerjee U."/>
        </authorList>
    </citation>
    <scope>DISRUPTION PHENOTYPE</scope>
</reference>
<organism>
    <name type="scientific">Drosophila melanogaster</name>
    <name type="common">Fruit fly</name>
    <dbReference type="NCBI Taxonomy" id="7227"/>
    <lineage>
        <taxon>Eukaryota</taxon>
        <taxon>Metazoa</taxon>
        <taxon>Ecdysozoa</taxon>
        <taxon>Arthropoda</taxon>
        <taxon>Hexapoda</taxon>
        <taxon>Insecta</taxon>
        <taxon>Pterygota</taxon>
        <taxon>Neoptera</taxon>
        <taxon>Endopterygota</taxon>
        <taxon>Diptera</taxon>
        <taxon>Brachycera</taxon>
        <taxon>Muscomorpha</taxon>
        <taxon>Ephydroidea</taxon>
        <taxon>Drosophilidae</taxon>
        <taxon>Drosophila</taxon>
        <taxon>Sophophora</taxon>
    </lineage>
</organism>
<evidence type="ECO:0000255" key="1">
    <source>
        <dbReference type="HAMAP-Rule" id="MF_03189"/>
    </source>
</evidence>
<evidence type="ECO:0000256" key="2">
    <source>
        <dbReference type="SAM" id="MobiDB-lite"/>
    </source>
</evidence>
<evidence type="ECO:0000269" key="3">
    <source>
    </source>
</evidence>
<proteinExistence type="evidence at transcript level"/>
<name>COQ2_DROME</name>
<comment type="function">
    <text evidence="1">Catalyzes the prenylation of para-hydroxybenzoate (PHB) with an all-trans polyprenyl group. Mediates the second step in the final reaction sequence of coenzyme Q (CoQ) biosynthesis, which is the condensation of the polyisoprenoid side chain with PHB, generating the first membrane-bound Q intermediate.</text>
</comment>
<comment type="catalytic activity">
    <reaction evidence="1">
        <text>an all-trans-polyprenyl diphosphate + 4-hydroxybenzoate = a 4-hydroxy-3-(all-trans-polyprenyl)benzoate + diphosphate</text>
        <dbReference type="Rhea" id="RHEA:44504"/>
        <dbReference type="Rhea" id="RHEA-COMP:9514"/>
        <dbReference type="Rhea" id="RHEA-COMP:9564"/>
        <dbReference type="ChEBI" id="CHEBI:17879"/>
        <dbReference type="ChEBI" id="CHEBI:33019"/>
        <dbReference type="ChEBI" id="CHEBI:58914"/>
        <dbReference type="ChEBI" id="CHEBI:78396"/>
        <dbReference type="EC" id="2.5.1.39"/>
    </reaction>
</comment>
<comment type="cofactor">
    <cofactor evidence="1">
        <name>Mg(2+)</name>
        <dbReference type="ChEBI" id="CHEBI:18420"/>
    </cofactor>
</comment>
<comment type="pathway">
    <text evidence="1">Cofactor biosynthesis; ubiquinone biosynthesis.</text>
</comment>
<comment type="subcellular location">
    <subcellularLocation>
        <location evidence="1">Mitochondrion inner membrane</location>
        <topology evidence="1">Multi-pass membrane protein</topology>
        <orientation evidence="1">Matrix side</orientation>
    </subcellularLocation>
</comment>
<comment type="disruption phenotype">
    <text evidence="3">Flies exhibit a G1/S block in the third larval instar with normal neuronal differentiation.</text>
</comment>
<comment type="similarity">
    <text evidence="1">Belongs to the UbiA prenyltransferase family.</text>
</comment>